<name>Y2930_BACVZ</name>
<gene>
    <name type="ordered locus">RBAM_029300</name>
</gene>
<accession>A7Z8D5</accession>
<reference key="1">
    <citation type="journal article" date="2007" name="Nat. Biotechnol.">
        <title>Comparative analysis of the complete genome sequence of the plant growth-promoting bacterium Bacillus amyloliquefaciens FZB42.</title>
        <authorList>
            <person name="Chen X.H."/>
            <person name="Koumoutsi A."/>
            <person name="Scholz R."/>
            <person name="Eisenreich A."/>
            <person name="Schneider K."/>
            <person name="Heinemeyer I."/>
            <person name="Morgenstern B."/>
            <person name="Voss B."/>
            <person name="Hess W.R."/>
            <person name="Reva O."/>
            <person name="Junge H."/>
            <person name="Voigt B."/>
            <person name="Jungblut P.R."/>
            <person name="Vater J."/>
            <person name="Suessmuth R."/>
            <person name="Liesegang H."/>
            <person name="Strittmatter A."/>
            <person name="Gottschalk G."/>
            <person name="Borriss R."/>
        </authorList>
    </citation>
    <scope>NUCLEOTIDE SEQUENCE [LARGE SCALE GENOMIC DNA]</scope>
    <source>
        <strain>DSM 23117 / BGSC 10A6 / LMG 26770 / FZB42</strain>
    </source>
</reference>
<comment type="similarity">
    <text evidence="1">Belongs to the UPF0349 family.</text>
</comment>
<organism>
    <name type="scientific">Bacillus velezensis (strain DSM 23117 / BGSC 10A6 / LMG 26770 / FZB42)</name>
    <name type="common">Bacillus amyloliquefaciens subsp. plantarum</name>
    <dbReference type="NCBI Taxonomy" id="326423"/>
    <lineage>
        <taxon>Bacteria</taxon>
        <taxon>Bacillati</taxon>
        <taxon>Bacillota</taxon>
        <taxon>Bacilli</taxon>
        <taxon>Bacillales</taxon>
        <taxon>Bacillaceae</taxon>
        <taxon>Bacillus</taxon>
        <taxon>Bacillus amyloliquefaciens group</taxon>
    </lineage>
</organism>
<proteinExistence type="inferred from homology"/>
<dbReference type="EMBL" id="CP000560">
    <property type="protein sequence ID" value="ABS75261.1"/>
    <property type="molecule type" value="Genomic_DNA"/>
</dbReference>
<dbReference type="RefSeq" id="WP_007408721.1">
    <property type="nucleotide sequence ID" value="NC_009725.2"/>
</dbReference>
<dbReference type="SMR" id="A7Z8D5"/>
<dbReference type="GeneID" id="93082074"/>
<dbReference type="KEGG" id="bay:RBAM_029300"/>
<dbReference type="HOGENOM" id="CLU_182025_0_0_9"/>
<dbReference type="Proteomes" id="UP000001120">
    <property type="component" value="Chromosome"/>
</dbReference>
<dbReference type="HAMAP" id="MF_01542">
    <property type="entry name" value="UPF0349"/>
    <property type="match status" value="1"/>
</dbReference>
<dbReference type="InterPro" id="IPR009910">
    <property type="entry name" value="DUF1450"/>
</dbReference>
<dbReference type="InterPro" id="IPR022916">
    <property type="entry name" value="UPF0349"/>
</dbReference>
<dbReference type="NCBIfam" id="NF010190">
    <property type="entry name" value="PRK13669.1"/>
    <property type="match status" value="1"/>
</dbReference>
<dbReference type="Pfam" id="PF07293">
    <property type="entry name" value="DUF1450"/>
    <property type="match status" value="1"/>
</dbReference>
<evidence type="ECO:0000255" key="1">
    <source>
        <dbReference type="HAMAP-Rule" id="MF_01542"/>
    </source>
</evidence>
<protein>
    <recommendedName>
        <fullName evidence="1">UPF0349 protein RBAM_029300</fullName>
    </recommendedName>
</protein>
<feature type="chain" id="PRO_1000087645" description="UPF0349 protein RBAM_029300">
    <location>
        <begin position="1"/>
        <end position="78"/>
    </location>
</feature>
<sequence length="78" mass="8628">MNPMIEFCVSNLARGSQEALEILEKDPNLDVLEYGCLSYCGKCMESLFALVNGEVVTGGTPAELVDNIYTFIEENPMF</sequence>